<comment type="function">
    <text evidence="1">Together with its co-chaperonin GroES, plays an essential role in assisting protein folding. The GroEL-GroES system forms a nano-cage that allows encapsulation of the non-native substrate proteins and provides a physical environment optimized to promote and accelerate protein folding.</text>
</comment>
<comment type="catalytic activity">
    <reaction evidence="1">
        <text>ATP + H2O + a folded polypeptide = ADP + phosphate + an unfolded polypeptide.</text>
        <dbReference type="EC" id="5.6.1.7"/>
    </reaction>
</comment>
<comment type="subunit">
    <text evidence="1">Forms a cylinder of 14 subunits composed of two heptameric rings stacked back-to-back. Interacts with the co-chaperonin GroES.</text>
</comment>
<comment type="subcellular location">
    <subcellularLocation>
        <location evidence="1">Cytoplasm</location>
    </subcellularLocation>
</comment>
<comment type="similarity">
    <text evidence="1">Belongs to the chaperonin (HSP60) family.</text>
</comment>
<sequence>MPKQLYFNEDARRALKRGVDIVADAVKTTLGPRGRNVSIDKKFGAPTVTHDGVTVAKEIELKDPFENMGARLLVEVATKTNDVVGDGTTTATVLAQSIVNEGLKMVAAGANPMLIKRGLDKAVEAVVAELKSVAIPVRDRADIAHVAAISAADSEIGDLIAEVMEKVGKDGVITVEESKGIAFEKEYTEGMQIDRGYISPYFVTNPERMEAELEDPYILITDKKISSIQDILPVLEKALQVTKNLVIIAEDVDGEALATLVVNKLRGTINALAVKAPGFGDRRKAMLQDIAILTGGTLISEEIGRKLDSATVEDLGRARRVVSDKDNTTIIEGRGDERAIRARIEQIRAQIETTTSDFDREKLQERLAKLAGGVAVLKVGAATEPELKEKKHRVEDALSTARSAVEEGIVPGGGVALLNAIPALDRVQVTYEDEKYGVQILRRALEEPMRQLARNAGEDGAVIIDTVRRLQKEKNDKNIGYNVLTGEFGSMIEMGIIDPVKVTRSAVQNAVSIAGLLLTTEALIADIPEEKPATPTPGGGGMDF</sequence>
<dbReference type="EC" id="5.6.1.7" evidence="1"/>
<dbReference type="EMBL" id="CP000686">
    <property type="protein sequence ID" value="ABQ92475.1"/>
    <property type="molecule type" value="Genomic_DNA"/>
</dbReference>
<dbReference type="SMR" id="A5V0S2"/>
<dbReference type="STRING" id="357808.RoseRS_4131"/>
<dbReference type="KEGG" id="rrs:RoseRS_4131"/>
<dbReference type="eggNOG" id="COG0459">
    <property type="taxonomic scope" value="Bacteria"/>
</dbReference>
<dbReference type="HOGENOM" id="CLU_016503_3_0_0"/>
<dbReference type="OrthoDB" id="9766614at2"/>
<dbReference type="Proteomes" id="UP000006554">
    <property type="component" value="Chromosome"/>
</dbReference>
<dbReference type="GO" id="GO:0005737">
    <property type="term" value="C:cytoplasm"/>
    <property type="evidence" value="ECO:0007669"/>
    <property type="project" value="UniProtKB-SubCell"/>
</dbReference>
<dbReference type="GO" id="GO:0005524">
    <property type="term" value="F:ATP binding"/>
    <property type="evidence" value="ECO:0007669"/>
    <property type="project" value="UniProtKB-UniRule"/>
</dbReference>
<dbReference type="GO" id="GO:0140662">
    <property type="term" value="F:ATP-dependent protein folding chaperone"/>
    <property type="evidence" value="ECO:0007669"/>
    <property type="project" value="InterPro"/>
</dbReference>
<dbReference type="GO" id="GO:0016853">
    <property type="term" value="F:isomerase activity"/>
    <property type="evidence" value="ECO:0007669"/>
    <property type="project" value="UniProtKB-KW"/>
</dbReference>
<dbReference type="GO" id="GO:0051082">
    <property type="term" value="F:unfolded protein binding"/>
    <property type="evidence" value="ECO:0007669"/>
    <property type="project" value="UniProtKB-UniRule"/>
</dbReference>
<dbReference type="GO" id="GO:0042026">
    <property type="term" value="P:protein refolding"/>
    <property type="evidence" value="ECO:0007669"/>
    <property type="project" value="UniProtKB-UniRule"/>
</dbReference>
<dbReference type="CDD" id="cd03344">
    <property type="entry name" value="GroEL"/>
    <property type="match status" value="1"/>
</dbReference>
<dbReference type="FunFam" id="3.50.7.10:FF:000001">
    <property type="entry name" value="60 kDa chaperonin"/>
    <property type="match status" value="1"/>
</dbReference>
<dbReference type="Gene3D" id="3.50.7.10">
    <property type="entry name" value="GroEL"/>
    <property type="match status" value="1"/>
</dbReference>
<dbReference type="Gene3D" id="1.10.560.10">
    <property type="entry name" value="GroEL-like equatorial domain"/>
    <property type="match status" value="1"/>
</dbReference>
<dbReference type="Gene3D" id="3.30.260.10">
    <property type="entry name" value="TCP-1-like chaperonin intermediate domain"/>
    <property type="match status" value="1"/>
</dbReference>
<dbReference type="HAMAP" id="MF_00600">
    <property type="entry name" value="CH60"/>
    <property type="match status" value="1"/>
</dbReference>
<dbReference type="InterPro" id="IPR001844">
    <property type="entry name" value="Cpn60/GroEL"/>
</dbReference>
<dbReference type="InterPro" id="IPR002423">
    <property type="entry name" value="Cpn60/GroEL/TCP-1"/>
</dbReference>
<dbReference type="InterPro" id="IPR027409">
    <property type="entry name" value="GroEL-like_apical_dom_sf"/>
</dbReference>
<dbReference type="InterPro" id="IPR027413">
    <property type="entry name" value="GROEL-like_equatorial_sf"/>
</dbReference>
<dbReference type="InterPro" id="IPR027410">
    <property type="entry name" value="TCP-1-like_intermed_sf"/>
</dbReference>
<dbReference type="NCBIfam" id="TIGR02348">
    <property type="entry name" value="GroEL"/>
    <property type="match status" value="1"/>
</dbReference>
<dbReference type="NCBIfam" id="NF000592">
    <property type="entry name" value="PRK00013.1"/>
    <property type="match status" value="1"/>
</dbReference>
<dbReference type="NCBIfam" id="NF009487">
    <property type="entry name" value="PRK12849.1"/>
    <property type="match status" value="1"/>
</dbReference>
<dbReference type="NCBIfam" id="NF009488">
    <property type="entry name" value="PRK12850.1"/>
    <property type="match status" value="1"/>
</dbReference>
<dbReference type="NCBIfam" id="NF009489">
    <property type="entry name" value="PRK12851.1"/>
    <property type="match status" value="1"/>
</dbReference>
<dbReference type="PANTHER" id="PTHR45633">
    <property type="entry name" value="60 KDA HEAT SHOCK PROTEIN, MITOCHONDRIAL"/>
    <property type="match status" value="1"/>
</dbReference>
<dbReference type="Pfam" id="PF00118">
    <property type="entry name" value="Cpn60_TCP1"/>
    <property type="match status" value="1"/>
</dbReference>
<dbReference type="PRINTS" id="PR00298">
    <property type="entry name" value="CHAPERONIN60"/>
</dbReference>
<dbReference type="SUPFAM" id="SSF52029">
    <property type="entry name" value="GroEL apical domain-like"/>
    <property type="match status" value="1"/>
</dbReference>
<dbReference type="SUPFAM" id="SSF48592">
    <property type="entry name" value="GroEL equatorial domain-like"/>
    <property type="match status" value="1"/>
</dbReference>
<dbReference type="SUPFAM" id="SSF54849">
    <property type="entry name" value="GroEL-intermediate domain like"/>
    <property type="match status" value="1"/>
</dbReference>
<protein>
    <recommendedName>
        <fullName evidence="1">Chaperonin GroEL 2</fullName>
        <ecNumber evidence="1">5.6.1.7</ecNumber>
    </recommendedName>
    <alternativeName>
        <fullName evidence="1">60 kDa chaperonin 2</fullName>
    </alternativeName>
    <alternativeName>
        <fullName evidence="1">Chaperonin-60 2</fullName>
        <shortName evidence="1">Cpn60 2</shortName>
    </alternativeName>
</protein>
<accession>A5V0S2</accession>
<reference key="1">
    <citation type="submission" date="2007-04" db="EMBL/GenBank/DDBJ databases">
        <title>Complete sequence of Roseiflexus sp. RS-1.</title>
        <authorList>
            <consortium name="US DOE Joint Genome Institute"/>
            <person name="Copeland A."/>
            <person name="Lucas S."/>
            <person name="Lapidus A."/>
            <person name="Barry K."/>
            <person name="Detter J.C."/>
            <person name="Glavina del Rio T."/>
            <person name="Hammon N."/>
            <person name="Israni S."/>
            <person name="Dalin E."/>
            <person name="Tice H."/>
            <person name="Pitluck S."/>
            <person name="Chertkov O."/>
            <person name="Brettin T."/>
            <person name="Bruce D."/>
            <person name="Han C."/>
            <person name="Schmutz J."/>
            <person name="Larimer F."/>
            <person name="Land M."/>
            <person name="Hauser L."/>
            <person name="Kyrpides N."/>
            <person name="Mikhailova N."/>
            <person name="Bryant D.A."/>
            <person name="Richardson P."/>
        </authorList>
    </citation>
    <scope>NUCLEOTIDE SEQUENCE [LARGE SCALE GENOMIC DNA]</scope>
    <source>
        <strain>RS-1</strain>
    </source>
</reference>
<gene>
    <name evidence="1" type="primary">groEL2</name>
    <name evidence="1" type="synonym">groL2</name>
    <name type="ordered locus">RoseRS_4131</name>
</gene>
<evidence type="ECO:0000255" key="1">
    <source>
        <dbReference type="HAMAP-Rule" id="MF_00600"/>
    </source>
</evidence>
<proteinExistence type="inferred from homology"/>
<name>CH602_ROSS1</name>
<organism>
    <name type="scientific">Roseiflexus sp. (strain RS-1)</name>
    <dbReference type="NCBI Taxonomy" id="357808"/>
    <lineage>
        <taxon>Bacteria</taxon>
        <taxon>Bacillati</taxon>
        <taxon>Chloroflexota</taxon>
        <taxon>Chloroflexia</taxon>
        <taxon>Chloroflexales</taxon>
        <taxon>Roseiflexineae</taxon>
        <taxon>Roseiflexaceae</taxon>
        <taxon>Roseiflexus</taxon>
    </lineage>
</organism>
<feature type="chain" id="PRO_0000332067" description="Chaperonin GroEL 2">
    <location>
        <begin position="1"/>
        <end position="544"/>
    </location>
</feature>
<feature type="binding site" evidence="1">
    <location>
        <begin position="29"/>
        <end position="32"/>
    </location>
    <ligand>
        <name>ATP</name>
        <dbReference type="ChEBI" id="CHEBI:30616"/>
    </ligand>
</feature>
<feature type="binding site" evidence="1">
    <location>
        <begin position="86"/>
        <end position="90"/>
    </location>
    <ligand>
        <name>ATP</name>
        <dbReference type="ChEBI" id="CHEBI:30616"/>
    </ligand>
</feature>
<feature type="binding site" evidence="1">
    <location>
        <position position="413"/>
    </location>
    <ligand>
        <name>ATP</name>
        <dbReference type="ChEBI" id="CHEBI:30616"/>
    </ligand>
</feature>
<feature type="binding site" evidence="1">
    <location>
        <begin position="482"/>
        <end position="484"/>
    </location>
    <ligand>
        <name>ATP</name>
        <dbReference type="ChEBI" id="CHEBI:30616"/>
    </ligand>
</feature>
<feature type="binding site" evidence="1">
    <location>
        <position position="498"/>
    </location>
    <ligand>
        <name>ATP</name>
        <dbReference type="ChEBI" id="CHEBI:30616"/>
    </ligand>
</feature>
<keyword id="KW-0067">ATP-binding</keyword>
<keyword id="KW-0143">Chaperone</keyword>
<keyword id="KW-0963">Cytoplasm</keyword>
<keyword id="KW-0413">Isomerase</keyword>
<keyword id="KW-0547">Nucleotide-binding</keyword>